<feature type="signal peptide" evidence="1">
    <location>
        <begin position="1"/>
        <end position="26"/>
    </location>
</feature>
<feature type="chain" id="PRO_0000251709" description="Transmembrane protein 92">
    <location>
        <begin position="27"/>
        <end position="159"/>
    </location>
</feature>
<feature type="topological domain" description="Extracellular" evidence="1">
    <location>
        <begin position="27"/>
        <end position="57"/>
    </location>
</feature>
<feature type="transmembrane region" description="Helical" evidence="1">
    <location>
        <begin position="58"/>
        <end position="78"/>
    </location>
</feature>
<feature type="topological domain" description="Cytoplasmic" evidence="1">
    <location>
        <begin position="79"/>
        <end position="159"/>
    </location>
</feature>
<feature type="region of interest" description="Disordered" evidence="2">
    <location>
        <begin position="122"/>
        <end position="159"/>
    </location>
</feature>
<feature type="sequence variant" id="VAR_061715" description="In dbSNP:rs9894445.">
    <original>A</original>
    <variation>T</variation>
    <location>
        <position position="4"/>
    </location>
</feature>
<feature type="sequence variant" id="VAR_027704" description="In dbSNP:rs6504642.">
    <original>S</original>
    <variation>N</variation>
    <location>
        <position position="90"/>
    </location>
</feature>
<feature type="sequence variant" id="VAR_027703" description="In dbSNP:rs6504642." evidence="3 4">
    <original>S</original>
    <variation>T</variation>
    <location>
        <position position="90"/>
    </location>
</feature>
<proteinExistence type="evidence at protein level"/>
<keyword id="KW-0472">Membrane</keyword>
<keyword id="KW-1267">Proteomics identification</keyword>
<keyword id="KW-1185">Reference proteome</keyword>
<keyword id="KW-0732">Signal</keyword>
<keyword id="KW-0812">Transmembrane</keyword>
<keyword id="KW-1133">Transmembrane helix</keyword>
<sequence length="159" mass="17229">MSQAWVPGLAPTLLFSLLAGPQKIAAKCGLILACPKGFKCCGDSCCQENELFPGPVRIFVIIFLVILSVFCICGLAKCFCRNCREPEPDSPVDCRGPLELPSIIPPERVRVSLSAPPPPYSEVILKPSLGPTPTEPPPPYSFRPEEYTGDQRGIDNPAF</sequence>
<dbReference type="EMBL" id="AY358204">
    <property type="protein sequence ID" value="AAQ88571.1"/>
    <property type="molecule type" value="mRNA"/>
</dbReference>
<dbReference type="EMBL" id="AK090637">
    <property type="protein sequence ID" value="BAC03495.1"/>
    <property type="molecule type" value="mRNA"/>
</dbReference>
<dbReference type="EMBL" id="BC064507">
    <property type="protein sequence ID" value="AAH64507.1"/>
    <property type="molecule type" value="mRNA"/>
</dbReference>
<dbReference type="CCDS" id="CCDS11562.1"/>
<dbReference type="RefSeq" id="NP_001161687.1">
    <property type="nucleotide sequence ID" value="NM_001168215.2"/>
</dbReference>
<dbReference type="RefSeq" id="NP_694961.2">
    <property type="nucleotide sequence ID" value="NM_153229.3"/>
</dbReference>
<dbReference type="BioGRID" id="127818">
    <property type="interactions" value="18"/>
</dbReference>
<dbReference type="FunCoup" id="Q6UXU6">
    <property type="interactions" value="495"/>
</dbReference>
<dbReference type="IntAct" id="Q6UXU6">
    <property type="interactions" value="15"/>
</dbReference>
<dbReference type="STRING" id="9606.ENSP00000300433"/>
<dbReference type="GlyGen" id="Q6UXU6">
    <property type="glycosylation" value="2 sites"/>
</dbReference>
<dbReference type="SwissPalm" id="Q6UXU6"/>
<dbReference type="BioMuta" id="TMEM92"/>
<dbReference type="DMDM" id="74738274"/>
<dbReference type="jPOST" id="Q6UXU6"/>
<dbReference type="MassIVE" id="Q6UXU6"/>
<dbReference type="PaxDb" id="9606-ENSP00000300433"/>
<dbReference type="PeptideAtlas" id="Q6UXU6"/>
<dbReference type="ProteomicsDB" id="67664"/>
<dbReference type="Antibodypedia" id="68410">
    <property type="antibodies" value="10 antibodies from 5 providers"/>
</dbReference>
<dbReference type="DNASU" id="162461"/>
<dbReference type="Ensembl" id="ENST00000300433.7">
    <property type="protein sequence ID" value="ENSP00000300433.3"/>
    <property type="gene ID" value="ENSG00000167105.8"/>
</dbReference>
<dbReference type="Ensembl" id="ENST00000507382.2">
    <property type="protein sequence ID" value="ENSP00000425144.1"/>
    <property type="gene ID" value="ENSG00000167105.8"/>
</dbReference>
<dbReference type="GeneID" id="162461"/>
<dbReference type="KEGG" id="hsa:162461"/>
<dbReference type="MANE-Select" id="ENST00000507382.2">
    <property type="protein sequence ID" value="ENSP00000425144.1"/>
    <property type="RefSeq nucleotide sequence ID" value="NM_153229.3"/>
    <property type="RefSeq protein sequence ID" value="NP_694961.2"/>
</dbReference>
<dbReference type="UCSC" id="uc002iqn.2">
    <property type="organism name" value="human"/>
</dbReference>
<dbReference type="AGR" id="HGNC:26579"/>
<dbReference type="CTD" id="162461"/>
<dbReference type="DisGeNET" id="162461"/>
<dbReference type="GeneCards" id="TMEM92"/>
<dbReference type="HGNC" id="HGNC:26579">
    <property type="gene designation" value="TMEM92"/>
</dbReference>
<dbReference type="HPA" id="ENSG00000167105">
    <property type="expression patterns" value="Tissue enhanced (intestine, stomach)"/>
</dbReference>
<dbReference type="MalaCards" id="TMEM92"/>
<dbReference type="MIM" id="619604">
    <property type="type" value="gene"/>
</dbReference>
<dbReference type="neXtProt" id="NX_Q6UXU6"/>
<dbReference type="OpenTargets" id="ENSG00000167105"/>
<dbReference type="PharmGKB" id="PA142670744"/>
<dbReference type="VEuPathDB" id="HostDB:ENSG00000167105"/>
<dbReference type="eggNOG" id="ENOG502TG6F">
    <property type="taxonomic scope" value="Eukaryota"/>
</dbReference>
<dbReference type="GeneTree" id="ENSGT00390000014943"/>
<dbReference type="HOGENOM" id="CLU_141701_0_0_1"/>
<dbReference type="InParanoid" id="Q6UXU6"/>
<dbReference type="OMA" id="MSQAWVT"/>
<dbReference type="OrthoDB" id="9451011at2759"/>
<dbReference type="PAN-GO" id="Q6UXU6">
    <property type="GO annotations" value="1 GO annotation based on evolutionary models"/>
</dbReference>
<dbReference type="PhylomeDB" id="Q6UXU6"/>
<dbReference type="TreeFam" id="TF338534"/>
<dbReference type="PathwayCommons" id="Q6UXU6"/>
<dbReference type="SignaLink" id="Q6UXU6"/>
<dbReference type="BioGRID-ORCS" id="162461">
    <property type="hits" value="15 hits in 1116 CRISPR screens"/>
</dbReference>
<dbReference type="ChiTaRS" id="TMEM92">
    <property type="organism name" value="human"/>
</dbReference>
<dbReference type="GenomeRNAi" id="162461"/>
<dbReference type="Pharos" id="Q6UXU6">
    <property type="development level" value="Tdark"/>
</dbReference>
<dbReference type="PRO" id="PR:Q6UXU6"/>
<dbReference type="Proteomes" id="UP000005640">
    <property type="component" value="Chromosome 17"/>
</dbReference>
<dbReference type="RNAct" id="Q6UXU6">
    <property type="molecule type" value="protein"/>
</dbReference>
<dbReference type="Bgee" id="ENSG00000167105">
    <property type="expression patterns" value="Expressed in pancreatic ductal cell and 116 other cell types or tissues"/>
</dbReference>
<dbReference type="GO" id="GO:0016020">
    <property type="term" value="C:membrane"/>
    <property type="evidence" value="ECO:0007669"/>
    <property type="project" value="UniProtKB-SubCell"/>
</dbReference>
<dbReference type="GO" id="GO:0005654">
    <property type="term" value="C:nucleoplasm"/>
    <property type="evidence" value="ECO:0000314"/>
    <property type="project" value="HPA"/>
</dbReference>
<dbReference type="InterPro" id="IPR021684">
    <property type="entry name" value="WBP1-like"/>
</dbReference>
<dbReference type="PANTHER" id="PTHR31359">
    <property type="entry name" value="TRANSMEMBRANE PROTEIN 92"/>
    <property type="match status" value="1"/>
</dbReference>
<dbReference type="PANTHER" id="PTHR31359:SF31">
    <property type="entry name" value="TRANSMEMBRANE PROTEIN 92"/>
    <property type="match status" value="1"/>
</dbReference>
<dbReference type="Pfam" id="PF11669">
    <property type="entry name" value="WBP-1"/>
    <property type="match status" value="1"/>
</dbReference>
<evidence type="ECO:0000255" key="1"/>
<evidence type="ECO:0000256" key="2">
    <source>
        <dbReference type="SAM" id="MobiDB-lite"/>
    </source>
</evidence>
<evidence type="ECO:0000269" key="3">
    <source>
    </source>
</evidence>
<evidence type="ECO:0000269" key="4">
    <source>
    </source>
</evidence>
<evidence type="ECO:0000305" key="5"/>
<name>TMM92_HUMAN</name>
<gene>
    <name type="primary">TMEM92</name>
    <name type="ORF">UNQ5801/PRO19608</name>
</gene>
<comment type="interaction">
    <interactant intactId="EBI-10975829">
        <id>Q6UXU6</id>
    </interactant>
    <interactant intactId="EBI-12831318">
        <id>Q96Q80</id>
        <label>DERL3</label>
    </interactant>
    <organismsDiffer>false</organismsDiffer>
    <experiments>3</experiments>
</comment>
<comment type="interaction">
    <interactant intactId="EBI-10975829">
        <id>Q6UXU6</id>
    </interactant>
    <interactant intactId="EBI-10244780">
        <id>Q5QGT7</id>
        <label>RTP2</label>
    </interactant>
    <organismsDiffer>false</organismsDiffer>
    <experiments>3</experiments>
</comment>
<comment type="subcellular location">
    <subcellularLocation>
        <location evidence="5">Membrane</location>
        <topology evidence="5">Single-pass type I membrane protein</topology>
    </subcellularLocation>
</comment>
<accession>Q6UXU6</accession>
<accession>Q8NBF0</accession>
<reference key="1">
    <citation type="journal article" date="2003" name="Genome Res.">
        <title>The secreted protein discovery initiative (SPDI), a large-scale effort to identify novel human secreted and transmembrane proteins: a bioinformatics assessment.</title>
        <authorList>
            <person name="Clark H.F."/>
            <person name="Gurney A.L."/>
            <person name="Abaya E."/>
            <person name="Baker K."/>
            <person name="Baldwin D.T."/>
            <person name="Brush J."/>
            <person name="Chen J."/>
            <person name="Chow B."/>
            <person name="Chui C."/>
            <person name="Crowley C."/>
            <person name="Currell B."/>
            <person name="Deuel B."/>
            <person name="Dowd P."/>
            <person name="Eaton D."/>
            <person name="Foster J.S."/>
            <person name="Grimaldi C."/>
            <person name="Gu Q."/>
            <person name="Hass P.E."/>
            <person name="Heldens S."/>
            <person name="Huang A."/>
            <person name="Kim H.S."/>
            <person name="Klimowski L."/>
            <person name="Jin Y."/>
            <person name="Johnson S."/>
            <person name="Lee J."/>
            <person name="Lewis L."/>
            <person name="Liao D."/>
            <person name="Mark M.R."/>
            <person name="Robbie E."/>
            <person name="Sanchez C."/>
            <person name="Schoenfeld J."/>
            <person name="Seshagiri S."/>
            <person name="Simmons L."/>
            <person name="Singh J."/>
            <person name="Smith V."/>
            <person name="Stinson J."/>
            <person name="Vagts A."/>
            <person name="Vandlen R.L."/>
            <person name="Watanabe C."/>
            <person name="Wieand D."/>
            <person name="Woods K."/>
            <person name="Xie M.-H."/>
            <person name="Yansura D.G."/>
            <person name="Yi S."/>
            <person name="Yu G."/>
            <person name="Yuan J."/>
            <person name="Zhang M."/>
            <person name="Zhang Z."/>
            <person name="Goddard A.D."/>
            <person name="Wood W.I."/>
            <person name="Godowski P.J."/>
            <person name="Gray A.M."/>
        </authorList>
    </citation>
    <scope>NUCLEOTIDE SEQUENCE [LARGE SCALE MRNA]</scope>
</reference>
<reference key="2">
    <citation type="journal article" date="2004" name="Nat. Genet.">
        <title>Complete sequencing and characterization of 21,243 full-length human cDNAs.</title>
        <authorList>
            <person name="Ota T."/>
            <person name="Suzuki Y."/>
            <person name="Nishikawa T."/>
            <person name="Otsuki T."/>
            <person name="Sugiyama T."/>
            <person name="Irie R."/>
            <person name="Wakamatsu A."/>
            <person name="Hayashi K."/>
            <person name="Sato H."/>
            <person name="Nagai K."/>
            <person name="Kimura K."/>
            <person name="Makita H."/>
            <person name="Sekine M."/>
            <person name="Obayashi M."/>
            <person name="Nishi T."/>
            <person name="Shibahara T."/>
            <person name="Tanaka T."/>
            <person name="Ishii S."/>
            <person name="Yamamoto J."/>
            <person name="Saito K."/>
            <person name="Kawai Y."/>
            <person name="Isono Y."/>
            <person name="Nakamura Y."/>
            <person name="Nagahari K."/>
            <person name="Murakami K."/>
            <person name="Yasuda T."/>
            <person name="Iwayanagi T."/>
            <person name="Wagatsuma M."/>
            <person name="Shiratori A."/>
            <person name="Sudo H."/>
            <person name="Hosoiri T."/>
            <person name="Kaku Y."/>
            <person name="Kodaira H."/>
            <person name="Kondo H."/>
            <person name="Sugawara M."/>
            <person name="Takahashi M."/>
            <person name="Kanda K."/>
            <person name="Yokoi T."/>
            <person name="Furuya T."/>
            <person name="Kikkawa E."/>
            <person name="Omura Y."/>
            <person name="Abe K."/>
            <person name="Kamihara K."/>
            <person name="Katsuta N."/>
            <person name="Sato K."/>
            <person name="Tanikawa M."/>
            <person name="Yamazaki M."/>
            <person name="Ninomiya K."/>
            <person name="Ishibashi T."/>
            <person name="Yamashita H."/>
            <person name="Murakawa K."/>
            <person name="Fujimori K."/>
            <person name="Tanai H."/>
            <person name="Kimata M."/>
            <person name="Watanabe M."/>
            <person name="Hiraoka S."/>
            <person name="Chiba Y."/>
            <person name="Ishida S."/>
            <person name="Ono Y."/>
            <person name="Takiguchi S."/>
            <person name="Watanabe S."/>
            <person name="Yosida M."/>
            <person name="Hotuta T."/>
            <person name="Kusano J."/>
            <person name="Kanehori K."/>
            <person name="Takahashi-Fujii A."/>
            <person name="Hara H."/>
            <person name="Tanase T.-O."/>
            <person name="Nomura Y."/>
            <person name="Togiya S."/>
            <person name="Komai F."/>
            <person name="Hara R."/>
            <person name="Takeuchi K."/>
            <person name="Arita M."/>
            <person name="Imose N."/>
            <person name="Musashino K."/>
            <person name="Yuuki H."/>
            <person name="Oshima A."/>
            <person name="Sasaki N."/>
            <person name="Aotsuka S."/>
            <person name="Yoshikawa Y."/>
            <person name="Matsunawa H."/>
            <person name="Ichihara T."/>
            <person name="Shiohata N."/>
            <person name="Sano S."/>
            <person name="Moriya S."/>
            <person name="Momiyama H."/>
            <person name="Satoh N."/>
            <person name="Takami S."/>
            <person name="Terashima Y."/>
            <person name="Suzuki O."/>
            <person name="Nakagawa S."/>
            <person name="Senoh A."/>
            <person name="Mizoguchi H."/>
            <person name="Goto Y."/>
            <person name="Shimizu F."/>
            <person name="Wakebe H."/>
            <person name="Hishigaki H."/>
            <person name="Watanabe T."/>
            <person name="Sugiyama A."/>
            <person name="Takemoto M."/>
            <person name="Kawakami B."/>
            <person name="Yamazaki M."/>
            <person name="Watanabe K."/>
            <person name="Kumagai A."/>
            <person name="Itakura S."/>
            <person name="Fukuzumi Y."/>
            <person name="Fujimori Y."/>
            <person name="Komiyama M."/>
            <person name="Tashiro H."/>
            <person name="Tanigami A."/>
            <person name="Fujiwara T."/>
            <person name="Ono T."/>
            <person name="Yamada K."/>
            <person name="Fujii Y."/>
            <person name="Ozaki K."/>
            <person name="Hirao M."/>
            <person name="Ohmori Y."/>
            <person name="Kawabata A."/>
            <person name="Hikiji T."/>
            <person name="Kobatake N."/>
            <person name="Inagaki H."/>
            <person name="Ikema Y."/>
            <person name="Okamoto S."/>
            <person name="Okitani R."/>
            <person name="Kawakami T."/>
            <person name="Noguchi S."/>
            <person name="Itoh T."/>
            <person name="Shigeta K."/>
            <person name="Senba T."/>
            <person name="Matsumura K."/>
            <person name="Nakajima Y."/>
            <person name="Mizuno T."/>
            <person name="Morinaga M."/>
            <person name="Sasaki M."/>
            <person name="Togashi T."/>
            <person name="Oyama M."/>
            <person name="Hata H."/>
            <person name="Watanabe M."/>
            <person name="Komatsu T."/>
            <person name="Mizushima-Sugano J."/>
            <person name="Satoh T."/>
            <person name="Shirai Y."/>
            <person name="Takahashi Y."/>
            <person name="Nakagawa K."/>
            <person name="Okumura K."/>
            <person name="Nagase T."/>
            <person name="Nomura N."/>
            <person name="Kikuchi H."/>
            <person name="Masuho Y."/>
            <person name="Yamashita R."/>
            <person name="Nakai K."/>
            <person name="Yada T."/>
            <person name="Nakamura Y."/>
            <person name="Ohara O."/>
            <person name="Isogai T."/>
            <person name="Sugano S."/>
        </authorList>
    </citation>
    <scope>NUCLEOTIDE SEQUENCE [LARGE SCALE MRNA]</scope>
    <scope>VARIANT THR-90</scope>
</reference>
<reference key="3">
    <citation type="journal article" date="2004" name="Genome Res.">
        <title>The status, quality, and expansion of the NIH full-length cDNA project: the Mammalian Gene Collection (MGC).</title>
        <authorList>
            <consortium name="The MGC Project Team"/>
        </authorList>
    </citation>
    <scope>NUCLEOTIDE SEQUENCE [LARGE SCALE MRNA]</scope>
    <scope>VARIANT THR-90</scope>
    <source>
        <tissue>Lung</tissue>
    </source>
</reference>
<protein>
    <recommendedName>
        <fullName>Transmembrane protein 92</fullName>
    </recommendedName>
</protein>
<organism>
    <name type="scientific">Homo sapiens</name>
    <name type="common">Human</name>
    <dbReference type="NCBI Taxonomy" id="9606"/>
    <lineage>
        <taxon>Eukaryota</taxon>
        <taxon>Metazoa</taxon>
        <taxon>Chordata</taxon>
        <taxon>Craniata</taxon>
        <taxon>Vertebrata</taxon>
        <taxon>Euteleostomi</taxon>
        <taxon>Mammalia</taxon>
        <taxon>Eutheria</taxon>
        <taxon>Euarchontoglires</taxon>
        <taxon>Primates</taxon>
        <taxon>Haplorrhini</taxon>
        <taxon>Catarrhini</taxon>
        <taxon>Hominidae</taxon>
        <taxon>Homo</taxon>
    </lineage>
</organism>